<gene>
    <name evidence="2" type="primary">deoD</name>
    <name type="ordered locus">CV_3698</name>
</gene>
<proteinExistence type="inferred from homology"/>
<reference key="1">
    <citation type="journal article" date="2003" name="Proc. Natl. Acad. Sci. U.S.A.">
        <title>The complete genome sequence of Chromobacterium violaceum reveals remarkable and exploitable bacterial adaptability.</title>
        <authorList>
            <person name="Vasconcelos A.T.R."/>
            <person name="de Almeida D.F."/>
            <person name="Hungria M."/>
            <person name="Guimaraes C.T."/>
            <person name="Antonio R.V."/>
            <person name="Almeida F.C."/>
            <person name="de Almeida L.G.P."/>
            <person name="de Almeida R."/>
            <person name="Alves-Gomes J.A."/>
            <person name="Andrade E.M."/>
            <person name="Araripe J."/>
            <person name="de Araujo M.F.F."/>
            <person name="Astolfi-Filho S."/>
            <person name="Azevedo V."/>
            <person name="Baptista A.J."/>
            <person name="Bataus L.A.M."/>
            <person name="Batista J.S."/>
            <person name="Belo A."/>
            <person name="van den Berg C."/>
            <person name="Bogo M."/>
            <person name="Bonatto S."/>
            <person name="Bordignon J."/>
            <person name="Brigido M.M."/>
            <person name="Brito C.A."/>
            <person name="Brocchi M."/>
            <person name="Burity H.A."/>
            <person name="Camargo A.A."/>
            <person name="Cardoso D.D.P."/>
            <person name="Carneiro N.P."/>
            <person name="Carraro D.M."/>
            <person name="Carvalho C.M.B."/>
            <person name="Cascardo J.C.M."/>
            <person name="Cavada B.S."/>
            <person name="Chueire L.M.O."/>
            <person name="Creczynski-Pasa T.B."/>
            <person name="Cunha-Junior N.C."/>
            <person name="Fagundes N."/>
            <person name="Falcao C.L."/>
            <person name="Fantinatti F."/>
            <person name="Farias I.P."/>
            <person name="Felipe M.S.S."/>
            <person name="Ferrari L.P."/>
            <person name="Ferro J.A."/>
            <person name="Ferro M.I.T."/>
            <person name="Franco G.R."/>
            <person name="Freitas N.S.A."/>
            <person name="Furlan L.R."/>
            <person name="Gazzinelli R.T."/>
            <person name="Gomes E.A."/>
            <person name="Goncalves P.R."/>
            <person name="Grangeiro T.B."/>
            <person name="Grattapaglia D."/>
            <person name="Grisard E.C."/>
            <person name="Hanna E.S."/>
            <person name="Jardim S.N."/>
            <person name="Laurino J."/>
            <person name="Leoi L.C.T."/>
            <person name="Lima L.F.A."/>
            <person name="Loureiro M.F."/>
            <person name="Lyra M.C.C.P."/>
            <person name="Madeira H.M.F."/>
            <person name="Manfio G.P."/>
            <person name="Maranhao A.Q."/>
            <person name="Martins W.S."/>
            <person name="di Mauro S.M.Z."/>
            <person name="de Medeiros S.R.B."/>
            <person name="Meissner R.V."/>
            <person name="Moreira M.A.M."/>
            <person name="Nascimento F.F."/>
            <person name="Nicolas M.F."/>
            <person name="Oliveira J.G."/>
            <person name="Oliveira S.C."/>
            <person name="Paixao R.F.C."/>
            <person name="Parente J.A."/>
            <person name="Pedrosa F.O."/>
            <person name="Pena S.D.J."/>
            <person name="Pereira J.O."/>
            <person name="Pereira M."/>
            <person name="Pinto L.S.R.C."/>
            <person name="Pinto L.S."/>
            <person name="Porto J.I.R."/>
            <person name="Potrich D.P."/>
            <person name="Ramalho-Neto C.E."/>
            <person name="Reis A.M.M."/>
            <person name="Rigo L.U."/>
            <person name="Rondinelli E."/>
            <person name="Santos E.B.P."/>
            <person name="Santos F.R."/>
            <person name="Schneider M.P.C."/>
            <person name="Seuanez H.N."/>
            <person name="Silva A.M.R."/>
            <person name="da Silva A.L.C."/>
            <person name="Silva D.W."/>
            <person name="Silva R."/>
            <person name="Simoes I.C."/>
            <person name="Simon D."/>
            <person name="Soares C.M.A."/>
            <person name="Soares R.B.A."/>
            <person name="Souza E.M."/>
            <person name="Souza K.R.L."/>
            <person name="Souza R.C."/>
            <person name="Steffens M.B.R."/>
            <person name="Steindel M."/>
            <person name="Teixeira S.R."/>
            <person name="Urmenyi T."/>
            <person name="Vettore A."/>
            <person name="Wassem R."/>
            <person name="Zaha A."/>
            <person name="Simpson A.J.G."/>
        </authorList>
    </citation>
    <scope>NUCLEOTIDE SEQUENCE [LARGE SCALE GENOMIC DNA]</scope>
    <source>
        <strain>ATCC 12472 / DSM 30191 / JCM 1249 / CCUG 213 / NBRC 12614 / NCIMB 9131 / NCTC 9757 / MK</strain>
    </source>
</reference>
<organism>
    <name type="scientific">Chromobacterium violaceum (strain ATCC 12472 / DSM 30191 / JCM 1249 / CCUG 213 / NBRC 12614 / NCIMB 9131 / NCTC 9757 / MK)</name>
    <dbReference type="NCBI Taxonomy" id="243365"/>
    <lineage>
        <taxon>Bacteria</taxon>
        <taxon>Pseudomonadati</taxon>
        <taxon>Pseudomonadota</taxon>
        <taxon>Betaproteobacteria</taxon>
        <taxon>Neisseriales</taxon>
        <taxon>Chromobacteriaceae</taxon>
        <taxon>Chromobacterium</taxon>
    </lineage>
</organism>
<name>DEOD_CHRVO</name>
<protein>
    <recommendedName>
        <fullName evidence="2">Purine nucleoside phosphorylase DeoD-type</fullName>
        <shortName evidence="2">PNP</shortName>
        <ecNumber evidence="2">2.4.2.1</ecNumber>
    </recommendedName>
</protein>
<sequence>MATPHINAKDGAFAETVLMPGDPLRAQLIAETFLEGAELVTNVRNVFGYTGTYKGKRLSVMAHGMGIPSASIYTTELIKDYGVKNIIRIGSCGAVTPDIKLRELFVAMGASTDSKVNRMRFNDHDYAAIADYTLLRTVVDTAAEQGKKVTVGNVFSADLFYGVQPNMLDVLSKLQVNVIEMELAGIYSVAAQYGARAVGILTVSDIIPTGEATSAEERQTSFRDMMEVALDAAIKL</sequence>
<comment type="function">
    <text evidence="2">Catalyzes the reversible phosphorolytic breakdown of the N-glycosidic bond in the beta-(deoxy)ribonucleoside molecules, with the formation of the corresponding free purine bases and pentose-1-phosphate.</text>
</comment>
<comment type="catalytic activity">
    <reaction evidence="2">
        <text>a purine D-ribonucleoside + phosphate = a purine nucleobase + alpha-D-ribose 1-phosphate</text>
        <dbReference type="Rhea" id="RHEA:19805"/>
        <dbReference type="ChEBI" id="CHEBI:26386"/>
        <dbReference type="ChEBI" id="CHEBI:43474"/>
        <dbReference type="ChEBI" id="CHEBI:57720"/>
        <dbReference type="ChEBI" id="CHEBI:142355"/>
        <dbReference type="EC" id="2.4.2.1"/>
    </reaction>
</comment>
<comment type="catalytic activity">
    <reaction evidence="2">
        <text>a purine 2'-deoxy-D-ribonucleoside + phosphate = a purine nucleobase + 2-deoxy-alpha-D-ribose 1-phosphate</text>
        <dbReference type="Rhea" id="RHEA:36431"/>
        <dbReference type="ChEBI" id="CHEBI:26386"/>
        <dbReference type="ChEBI" id="CHEBI:43474"/>
        <dbReference type="ChEBI" id="CHEBI:57259"/>
        <dbReference type="ChEBI" id="CHEBI:142361"/>
        <dbReference type="EC" id="2.4.2.1"/>
    </reaction>
</comment>
<comment type="subunit">
    <text evidence="2">Homohexamer; trimer of homodimers.</text>
</comment>
<comment type="similarity">
    <text evidence="2">Belongs to the PNP/UDP phosphorylase family.</text>
</comment>
<dbReference type="EC" id="2.4.2.1" evidence="2"/>
<dbReference type="EMBL" id="AE016825">
    <property type="protein sequence ID" value="AAQ61360.1"/>
    <property type="molecule type" value="Genomic_DNA"/>
</dbReference>
<dbReference type="RefSeq" id="WP_011137245.1">
    <property type="nucleotide sequence ID" value="NC_005085.1"/>
</dbReference>
<dbReference type="SMR" id="Q7NRT2"/>
<dbReference type="STRING" id="243365.CV_3698"/>
<dbReference type="KEGG" id="cvi:CV_3698"/>
<dbReference type="eggNOG" id="COG0813">
    <property type="taxonomic scope" value="Bacteria"/>
</dbReference>
<dbReference type="HOGENOM" id="CLU_068457_2_0_4"/>
<dbReference type="OrthoDB" id="9782889at2"/>
<dbReference type="Proteomes" id="UP000001424">
    <property type="component" value="Chromosome"/>
</dbReference>
<dbReference type="GO" id="GO:0005829">
    <property type="term" value="C:cytosol"/>
    <property type="evidence" value="ECO:0007669"/>
    <property type="project" value="TreeGrafter"/>
</dbReference>
<dbReference type="GO" id="GO:0004731">
    <property type="term" value="F:purine-nucleoside phosphorylase activity"/>
    <property type="evidence" value="ECO:0007669"/>
    <property type="project" value="UniProtKB-UniRule"/>
</dbReference>
<dbReference type="GO" id="GO:0006152">
    <property type="term" value="P:purine nucleoside catabolic process"/>
    <property type="evidence" value="ECO:0007669"/>
    <property type="project" value="TreeGrafter"/>
</dbReference>
<dbReference type="CDD" id="cd09006">
    <property type="entry name" value="PNP_EcPNPI-like"/>
    <property type="match status" value="1"/>
</dbReference>
<dbReference type="Gene3D" id="3.40.50.1580">
    <property type="entry name" value="Nucleoside phosphorylase domain"/>
    <property type="match status" value="1"/>
</dbReference>
<dbReference type="HAMAP" id="MF_01627">
    <property type="entry name" value="Pur_nucleosid_phosp"/>
    <property type="match status" value="1"/>
</dbReference>
<dbReference type="InterPro" id="IPR004402">
    <property type="entry name" value="DeoD-type"/>
</dbReference>
<dbReference type="InterPro" id="IPR000845">
    <property type="entry name" value="Nucleoside_phosphorylase_d"/>
</dbReference>
<dbReference type="InterPro" id="IPR035994">
    <property type="entry name" value="Nucleoside_phosphorylase_sf"/>
</dbReference>
<dbReference type="NCBIfam" id="TIGR00107">
    <property type="entry name" value="deoD"/>
    <property type="match status" value="1"/>
</dbReference>
<dbReference type="NCBIfam" id="NF004489">
    <property type="entry name" value="PRK05819.1"/>
    <property type="match status" value="1"/>
</dbReference>
<dbReference type="NCBIfam" id="NF009914">
    <property type="entry name" value="PRK13374.1"/>
    <property type="match status" value="1"/>
</dbReference>
<dbReference type="PANTHER" id="PTHR43691:SF2">
    <property type="entry name" value="PURINE NUCLEOSIDE PHOSPHORYLASE DEOD-TYPE"/>
    <property type="match status" value="1"/>
</dbReference>
<dbReference type="PANTHER" id="PTHR43691">
    <property type="entry name" value="URIDINE PHOSPHORYLASE"/>
    <property type="match status" value="1"/>
</dbReference>
<dbReference type="Pfam" id="PF01048">
    <property type="entry name" value="PNP_UDP_1"/>
    <property type="match status" value="1"/>
</dbReference>
<dbReference type="SUPFAM" id="SSF53167">
    <property type="entry name" value="Purine and uridine phosphorylases"/>
    <property type="match status" value="1"/>
</dbReference>
<keyword id="KW-0328">Glycosyltransferase</keyword>
<keyword id="KW-1185">Reference proteome</keyword>
<keyword id="KW-0808">Transferase</keyword>
<evidence type="ECO:0000250" key="1">
    <source>
        <dbReference type="UniProtKB" id="P50389"/>
    </source>
</evidence>
<evidence type="ECO:0000255" key="2">
    <source>
        <dbReference type="HAMAP-Rule" id="MF_01627"/>
    </source>
</evidence>
<accession>Q7NRT2</accession>
<feature type="chain" id="PRO_0000063126" description="Purine nucleoside phosphorylase DeoD-type">
    <location>
        <begin position="1"/>
        <end position="236"/>
    </location>
</feature>
<feature type="active site" description="Proton donor" evidence="2">
    <location>
        <position position="205"/>
    </location>
</feature>
<feature type="binding site" evidence="1">
    <location>
        <position position="5"/>
    </location>
    <ligand>
        <name>a purine D-ribonucleoside</name>
        <dbReference type="ChEBI" id="CHEBI:142355"/>
        <note>ligand shared between dimeric partners</note>
    </ligand>
</feature>
<feature type="binding site" description="in other chain" evidence="1">
    <location>
        <position position="21"/>
    </location>
    <ligand>
        <name>phosphate</name>
        <dbReference type="ChEBI" id="CHEBI:43474"/>
        <note>ligand shared between dimeric partners</note>
    </ligand>
</feature>
<feature type="binding site" description="in other chain" evidence="1">
    <location>
        <position position="25"/>
    </location>
    <ligand>
        <name>phosphate</name>
        <dbReference type="ChEBI" id="CHEBI:43474"/>
        <note>ligand shared between dimeric partners</note>
    </ligand>
</feature>
<feature type="binding site" evidence="1">
    <location>
        <position position="44"/>
    </location>
    <ligand>
        <name>phosphate</name>
        <dbReference type="ChEBI" id="CHEBI:43474"/>
        <note>ligand shared between dimeric partners</note>
    </ligand>
</feature>
<feature type="binding site" description="in other chain" evidence="1">
    <location>
        <begin position="88"/>
        <end position="91"/>
    </location>
    <ligand>
        <name>phosphate</name>
        <dbReference type="ChEBI" id="CHEBI:43474"/>
        <note>ligand shared between dimeric partners</note>
    </ligand>
</feature>
<feature type="binding site" description="in other chain" evidence="1">
    <location>
        <begin position="180"/>
        <end position="182"/>
    </location>
    <ligand>
        <name>a purine D-ribonucleoside</name>
        <dbReference type="ChEBI" id="CHEBI:142355"/>
        <note>ligand shared between dimeric partners</note>
    </ligand>
</feature>
<feature type="binding site" description="in other chain" evidence="1">
    <location>
        <begin position="204"/>
        <end position="205"/>
    </location>
    <ligand>
        <name>a purine D-ribonucleoside</name>
        <dbReference type="ChEBI" id="CHEBI:142355"/>
        <note>ligand shared between dimeric partners</note>
    </ligand>
</feature>
<feature type="site" description="Important for catalytic activity" evidence="2">
    <location>
        <position position="218"/>
    </location>
</feature>